<name>EI2BD_MOUSE</name>
<dbReference type="EMBL" id="M98036">
    <property type="protein sequence ID" value="AAA68047.1"/>
    <property type="molecule type" value="mRNA"/>
</dbReference>
<dbReference type="EMBL" id="M98035">
    <property type="protein sequence ID" value="AAA68046.1"/>
    <property type="molecule type" value="mRNA"/>
</dbReference>
<dbReference type="EMBL" id="AK158282">
    <property type="protein sequence ID" value="BAE34444.1"/>
    <property type="molecule type" value="mRNA"/>
</dbReference>
<dbReference type="EMBL" id="CH466524">
    <property type="protein sequence ID" value="EDL37345.1"/>
    <property type="molecule type" value="Genomic_DNA"/>
</dbReference>
<dbReference type="EMBL" id="BC021884">
    <property type="protein sequence ID" value="AAH21884.1"/>
    <property type="molecule type" value="mRNA"/>
</dbReference>
<dbReference type="CCDS" id="CCDS19176.1">
    <molecule id="Q61749-1"/>
</dbReference>
<dbReference type="CCDS" id="CCDS51457.1">
    <molecule id="Q61749-2"/>
</dbReference>
<dbReference type="PIR" id="A55146">
    <property type="entry name" value="A55146"/>
</dbReference>
<dbReference type="RefSeq" id="NP_001120827.1">
    <molecule id="Q61749-2"/>
    <property type="nucleotide sequence ID" value="NM_001127355.1"/>
</dbReference>
<dbReference type="RefSeq" id="NP_001120828.1">
    <molecule id="Q61749-2"/>
    <property type="nucleotide sequence ID" value="NM_001127356.1"/>
</dbReference>
<dbReference type="RefSeq" id="NP_034252.2">
    <molecule id="Q61749-1"/>
    <property type="nucleotide sequence ID" value="NM_010122.2"/>
</dbReference>
<dbReference type="SMR" id="Q61749"/>
<dbReference type="BioGRID" id="199414">
    <property type="interactions" value="7"/>
</dbReference>
<dbReference type="FunCoup" id="Q61749">
    <property type="interactions" value="3161"/>
</dbReference>
<dbReference type="IntAct" id="Q61749">
    <property type="interactions" value="2"/>
</dbReference>
<dbReference type="MINT" id="Q61749"/>
<dbReference type="STRING" id="10090.ENSMUSP00000110250"/>
<dbReference type="GlyGen" id="Q61749">
    <property type="glycosylation" value="3 sites, 1 N-linked glycan (1 site), 1 O-linked glycan (1 site)"/>
</dbReference>
<dbReference type="iPTMnet" id="Q61749"/>
<dbReference type="PhosphoSitePlus" id="Q61749"/>
<dbReference type="jPOST" id="Q61749"/>
<dbReference type="PaxDb" id="10090-ENSMUSP00000110250"/>
<dbReference type="ProteomicsDB" id="277839">
    <molecule id="Q61749-1"/>
</dbReference>
<dbReference type="ProteomicsDB" id="277840">
    <molecule id="Q61749-2"/>
</dbReference>
<dbReference type="Pumba" id="Q61749"/>
<dbReference type="Antibodypedia" id="47347">
    <property type="antibodies" value="193 antibodies from 31 providers"/>
</dbReference>
<dbReference type="Ensembl" id="ENSMUST00000077693.10">
    <molecule id="Q61749-1"/>
    <property type="protein sequence ID" value="ENSMUSP00000076875.4"/>
    <property type="gene ID" value="ENSMUSG00000029145.13"/>
</dbReference>
<dbReference type="Ensembl" id="ENSMUST00000114603.8">
    <molecule id="Q61749-2"/>
    <property type="protein sequence ID" value="ENSMUSP00000110250.2"/>
    <property type="gene ID" value="ENSMUSG00000029145.13"/>
</dbReference>
<dbReference type="Ensembl" id="ENSMUST00000166769.8">
    <molecule id="Q61749-2"/>
    <property type="protein sequence ID" value="ENSMUSP00000130880.2"/>
    <property type="gene ID" value="ENSMUSG00000029145.13"/>
</dbReference>
<dbReference type="GeneID" id="13667"/>
<dbReference type="KEGG" id="mmu:13667"/>
<dbReference type="UCSC" id="uc008wxk.2">
    <molecule id="Q61749-2"/>
    <property type="organism name" value="mouse"/>
</dbReference>
<dbReference type="UCSC" id="uc008wxl.2">
    <molecule id="Q61749-1"/>
    <property type="organism name" value="mouse"/>
</dbReference>
<dbReference type="AGR" id="MGI:95300"/>
<dbReference type="CTD" id="8890"/>
<dbReference type="MGI" id="MGI:95300">
    <property type="gene designation" value="Eif2b4"/>
</dbReference>
<dbReference type="VEuPathDB" id="HostDB:ENSMUSG00000029145"/>
<dbReference type="eggNOG" id="KOG1467">
    <property type="taxonomic scope" value="Eukaryota"/>
</dbReference>
<dbReference type="GeneTree" id="ENSGT00550000075009"/>
<dbReference type="HOGENOM" id="CLU_016218_3_3_1"/>
<dbReference type="InParanoid" id="Q61749"/>
<dbReference type="OMA" id="MRDYVIC"/>
<dbReference type="OrthoDB" id="67241at9989"/>
<dbReference type="TreeFam" id="TF101508"/>
<dbReference type="Reactome" id="R-MMU-72731">
    <property type="pathway name" value="Recycling of eIF2:GDP"/>
</dbReference>
<dbReference type="BioGRID-ORCS" id="13667">
    <property type="hits" value="28 hits in 80 CRISPR screens"/>
</dbReference>
<dbReference type="ChiTaRS" id="Eif2b4">
    <property type="organism name" value="mouse"/>
</dbReference>
<dbReference type="PRO" id="PR:Q61749"/>
<dbReference type="Proteomes" id="UP000000589">
    <property type="component" value="Chromosome 5"/>
</dbReference>
<dbReference type="RNAct" id="Q61749">
    <property type="molecule type" value="protein"/>
</dbReference>
<dbReference type="Bgee" id="ENSMUSG00000029145">
    <property type="expression patterns" value="Expressed in primitive streak and 266 other cell types or tissues"/>
</dbReference>
<dbReference type="ExpressionAtlas" id="Q61749">
    <property type="expression patterns" value="baseline and differential"/>
</dbReference>
<dbReference type="GO" id="GO:0005737">
    <property type="term" value="C:cytoplasm"/>
    <property type="evidence" value="ECO:0000250"/>
    <property type="project" value="UniProtKB"/>
</dbReference>
<dbReference type="GO" id="GO:0005829">
    <property type="term" value="C:cytosol"/>
    <property type="evidence" value="ECO:0007669"/>
    <property type="project" value="UniProtKB-SubCell"/>
</dbReference>
<dbReference type="GO" id="GO:0005851">
    <property type="term" value="C:eukaryotic translation initiation factor 2B complex"/>
    <property type="evidence" value="ECO:0000250"/>
    <property type="project" value="UniProtKB"/>
</dbReference>
<dbReference type="GO" id="GO:0005085">
    <property type="term" value="F:guanyl-nucleotide exchange factor activity"/>
    <property type="evidence" value="ECO:0000250"/>
    <property type="project" value="UniProtKB"/>
</dbReference>
<dbReference type="GO" id="GO:0003743">
    <property type="term" value="F:translation initiation factor activity"/>
    <property type="evidence" value="ECO:0007669"/>
    <property type="project" value="UniProtKB-KW"/>
</dbReference>
<dbReference type="GO" id="GO:0002183">
    <property type="term" value="P:cytoplasmic translational initiation"/>
    <property type="evidence" value="ECO:0000250"/>
    <property type="project" value="UniProtKB"/>
</dbReference>
<dbReference type="GO" id="GO:0042552">
    <property type="term" value="P:myelination"/>
    <property type="evidence" value="ECO:0000250"/>
    <property type="project" value="UniProtKB"/>
</dbReference>
<dbReference type="GO" id="GO:0014003">
    <property type="term" value="P:oligodendrocyte development"/>
    <property type="evidence" value="ECO:0000250"/>
    <property type="project" value="UniProtKB"/>
</dbReference>
<dbReference type="GO" id="GO:0001541">
    <property type="term" value="P:ovarian follicle development"/>
    <property type="evidence" value="ECO:0000250"/>
    <property type="project" value="UniProtKB"/>
</dbReference>
<dbReference type="GO" id="GO:0050852">
    <property type="term" value="P:T cell receptor signaling pathway"/>
    <property type="evidence" value="ECO:0000250"/>
    <property type="project" value="UniProtKB"/>
</dbReference>
<dbReference type="GO" id="GO:0006413">
    <property type="term" value="P:translational initiation"/>
    <property type="evidence" value="ECO:0000250"/>
    <property type="project" value="UniProtKB"/>
</dbReference>
<dbReference type="FunFam" id="3.40.50.10470:FF:000002">
    <property type="entry name" value="Probable translation initiation factor eIF-2B subunit delta"/>
    <property type="match status" value="1"/>
</dbReference>
<dbReference type="Gene3D" id="3.40.50.10470">
    <property type="entry name" value="Translation initiation factor eif-2b, domain 2"/>
    <property type="match status" value="1"/>
</dbReference>
<dbReference type="InterPro" id="IPR000649">
    <property type="entry name" value="IF-2B-related"/>
</dbReference>
<dbReference type="InterPro" id="IPR042529">
    <property type="entry name" value="IF_2B-like_C"/>
</dbReference>
<dbReference type="InterPro" id="IPR037171">
    <property type="entry name" value="NagB/RpiA_transferase-like"/>
</dbReference>
<dbReference type="PANTHER" id="PTHR10233">
    <property type="entry name" value="TRANSLATION INITIATION FACTOR EIF-2B"/>
    <property type="match status" value="1"/>
</dbReference>
<dbReference type="PANTHER" id="PTHR10233:SF14">
    <property type="entry name" value="TRANSLATION INITIATION FACTOR EIF-2B SUBUNIT DELTA"/>
    <property type="match status" value="1"/>
</dbReference>
<dbReference type="Pfam" id="PF01008">
    <property type="entry name" value="IF-2B"/>
    <property type="match status" value="1"/>
</dbReference>
<dbReference type="SUPFAM" id="SSF100950">
    <property type="entry name" value="NagB/RpiA/CoA transferase-like"/>
    <property type="match status" value="1"/>
</dbReference>
<keyword id="KW-0007">Acetylation</keyword>
<keyword id="KW-0025">Alternative splicing</keyword>
<keyword id="KW-0963">Cytoplasm</keyword>
<keyword id="KW-0396">Initiation factor</keyword>
<keyword id="KW-0597">Phosphoprotein</keyword>
<keyword id="KW-0648">Protein biosynthesis</keyword>
<keyword id="KW-1185">Reference proteome</keyword>
<evidence type="ECO:0000250" key="1">
    <source>
        <dbReference type="UniProtKB" id="Q09924"/>
    </source>
</evidence>
<evidence type="ECO:0000250" key="2">
    <source>
        <dbReference type="UniProtKB" id="Q9UI10"/>
    </source>
</evidence>
<evidence type="ECO:0000256" key="3">
    <source>
        <dbReference type="SAM" id="MobiDB-lite"/>
    </source>
</evidence>
<evidence type="ECO:0000303" key="4">
    <source>
    </source>
</evidence>
<evidence type="ECO:0000305" key="5"/>
<sequence>MAAVAVAVREESRSEMKTELSPRPGAAGRELTQEEKLQLRKEKKQQKKKRKEEKGADQEIGSAVSAAQRQDPIRELPGPGSQLGGTAGEKLPAGRSKAELRAERRAKQEAERALKQARKGEQGGVPPQACPSTAGETTSGVKRVPEHTPADDPTLLRRLLRKPDRQQVPTRKDYGSKVSLFSHLPQYSRQSSLTQYMSIPSSVIHPAMVRLGLQYSQGLISGSNARCIALLHALQQVIQDYTTPPSEELSRDLVNKLKPYISFLTQCRPMSASMCNAIKFLTKEVTGMSSSKREEEAKSELREALDRYVQEKIVLAAQAISRFASTKISDGDVILVYGCSSLVSRILQEARVEGRRFRVVVVDSRPRLEGRHMLHSLVRAGVPTSYLLIPAASYVLPEVSKVLLGAHALLANGSVMSRVGTAQLALVARAHNVPVLVCCETYKFCERVQTDAFVSNELDDPDDLQCKRGDQVALANWQSHPSLRLLNLVYDVTPPELVDLVITELGMIPCSSVPVVLRVKSSDQ</sequence>
<organism>
    <name type="scientific">Mus musculus</name>
    <name type="common">Mouse</name>
    <dbReference type="NCBI Taxonomy" id="10090"/>
    <lineage>
        <taxon>Eukaryota</taxon>
        <taxon>Metazoa</taxon>
        <taxon>Chordata</taxon>
        <taxon>Craniata</taxon>
        <taxon>Vertebrata</taxon>
        <taxon>Euteleostomi</taxon>
        <taxon>Mammalia</taxon>
        <taxon>Eutheria</taxon>
        <taxon>Euarchontoglires</taxon>
        <taxon>Glires</taxon>
        <taxon>Rodentia</taxon>
        <taxon>Myomorpha</taxon>
        <taxon>Muroidea</taxon>
        <taxon>Muridae</taxon>
        <taxon>Murinae</taxon>
        <taxon>Mus</taxon>
        <taxon>Mus</taxon>
    </lineage>
</organism>
<reference key="1">
    <citation type="journal article" date="1994" name="J. Biol. Chem.">
        <title>The delta-subunit of murine guanine nucleotide exchange factor eIF-2B. Characterization of cDNAs predicts isoforms differing at the amino-terminal end.</title>
        <authorList>
            <person name="Henderson R.A."/>
            <person name="Krissansen G.W."/>
            <person name="Yong R.Y."/>
            <person name="Leung E."/>
            <person name="Watson J.D."/>
            <person name="Dholakia J.N."/>
        </authorList>
    </citation>
    <scope>NUCLEOTIDE SEQUENCE [MRNA] (ISOFORMS 1 AND 2)</scope>
    <source>
        <strain>CBA/J</strain>
        <tissue>Spleen</tissue>
    </source>
</reference>
<reference key="2">
    <citation type="journal article" date="2005" name="Science">
        <title>The transcriptional landscape of the mammalian genome.</title>
        <authorList>
            <person name="Carninci P."/>
            <person name="Kasukawa T."/>
            <person name="Katayama S."/>
            <person name="Gough J."/>
            <person name="Frith M.C."/>
            <person name="Maeda N."/>
            <person name="Oyama R."/>
            <person name="Ravasi T."/>
            <person name="Lenhard B."/>
            <person name="Wells C."/>
            <person name="Kodzius R."/>
            <person name="Shimokawa K."/>
            <person name="Bajic V.B."/>
            <person name="Brenner S.E."/>
            <person name="Batalov S."/>
            <person name="Forrest A.R."/>
            <person name="Zavolan M."/>
            <person name="Davis M.J."/>
            <person name="Wilming L.G."/>
            <person name="Aidinis V."/>
            <person name="Allen J.E."/>
            <person name="Ambesi-Impiombato A."/>
            <person name="Apweiler R."/>
            <person name="Aturaliya R.N."/>
            <person name="Bailey T.L."/>
            <person name="Bansal M."/>
            <person name="Baxter L."/>
            <person name="Beisel K.W."/>
            <person name="Bersano T."/>
            <person name="Bono H."/>
            <person name="Chalk A.M."/>
            <person name="Chiu K.P."/>
            <person name="Choudhary V."/>
            <person name="Christoffels A."/>
            <person name="Clutterbuck D.R."/>
            <person name="Crowe M.L."/>
            <person name="Dalla E."/>
            <person name="Dalrymple B.P."/>
            <person name="de Bono B."/>
            <person name="Della Gatta G."/>
            <person name="di Bernardo D."/>
            <person name="Down T."/>
            <person name="Engstrom P."/>
            <person name="Fagiolini M."/>
            <person name="Faulkner G."/>
            <person name="Fletcher C.F."/>
            <person name="Fukushima T."/>
            <person name="Furuno M."/>
            <person name="Futaki S."/>
            <person name="Gariboldi M."/>
            <person name="Georgii-Hemming P."/>
            <person name="Gingeras T.R."/>
            <person name="Gojobori T."/>
            <person name="Green R.E."/>
            <person name="Gustincich S."/>
            <person name="Harbers M."/>
            <person name="Hayashi Y."/>
            <person name="Hensch T.K."/>
            <person name="Hirokawa N."/>
            <person name="Hill D."/>
            <person name="Huminiecki L."/>
            <person name="Iacono M."/>
            <person name="Ikeo K."/>
            <person name="Iwama A."/>
            <person name="Ishikawa T."/>
            <person name="Jakt M."/>
            <person name="Kanapin A."/>
            <person name="Katoh M."/>
            <person name="Kawasawa Y."/>
            <person name="Kelso J."/>
            <person name="Kitamura H."/>
            <person name="Kitano H."/>
            <person name="Kollias G."/>
            <person name="Krishnan S.P."/>
            <person name="Kruger A."/>
            <person name="Kummerfeld S.K."/>
            <person name="Kurochkin I.V."/>
            <person name="Lareau L.F."/>
            <person name="Lazarevic D."/>
            <person name="Lipovich L."/>
            <person name="Liu J."/>
            <person name="Liuni S."/>
            <person name="McWilliam S."/>
            <person name="Madan Babu M."/>
            <person name="Madera M."/>
            <person name="Marchionni L."/>
            <person name="Matsuda H."/>
            <person name="Matsuzawa S."/>
            <person name="Miki H."/>
            <person name="Mignone F."/>
            <person name="Miyake S."/>
            <person name="Morris K."/>
            <person name="Mottagui-Tabar S."/>
            <person name="Mulder N."/>
            <person name="Nakano N."/>
            <person name="Nakauchi H."/>
            <person name="Ng P."/>
            <person name="Nilsson R."/>
            <person name="Nishiguchi S."/>
            <person name="Nishikawa S."/>
            <person name="Nori F."/>
            <person name="Ohara O."/>
            <person name="Okazaki Y."/>
            <person name="Orlando V."/>
            <person name="Pang K.C."/>
            <person name="Pavan W.J."/>
            <person name="Pavesi G."/>
            <person name="Pesole G."/>
            <person name="Petrovsky N."/>
            <person name="Piazza S."/>
            <person name="Reed J."/>
            <person name="Reid J.F."/>
            <person name="Ring B.Z."/>
            <person name="Ringwald M."/>
            <person name="Rost B."/>
            <person name="Ruan Y."/>
            <person name="Salzberg S.L."/>
            <person name="Sandelin A."/>
            <person name="Schneider C."/>
            <person name="Schoenbach C."/>
            <person name="Sekiguchi K."/>
            <person name="Semple C.A."/>
            <person name="Seno S."/>
            <person name="Sessa L."/>
            <person name="Sheng Y."/>
            <person name="Shibata Y."/>
            <person name="Shimada H."/>
            <person name="Shimada K."/>
            <person name="Silva D."/>
            <person name="Sinclair B."/>
            <person name="Sperling S."/>
            <person name="Stupka E."/>
            <person name="Sugiura K."/>
            <person name="Sultana R."/>
            <person name="Takenaka Y."/>
            <person name="Taki K."/>
            <person name="Tammoja K."/>
            <person name="Tan S.L."/>
            <person name="Tang S."/>
            <person name="Taylor M.S."/>
            <person name="Tegner J."/>
            <person name="Teichmann S.A."/>
            <person name="Ueda H.R."/>
            <person name="van Nimwegen E."/>
            <person name="Verardo R."/>
            <person name="Wei C.L."/>
            <person name="Yagi K."/>
            <person name="Yamanishi H."/>
            <person name="Zabarovsky E."/>
            <person name="Zhu S."/>
            <person name="Zimmer A."/>
            <person name="Hide W."/>
            <person name="Bult C."/>
            <person name="Grimmond S.M."/>
            <person name="Teasdale R.D."/>
            <person name="Liu E.T."/>
            <person name="Brusic V."/>
            <person name="Quackenbush J."/>
            <person name="Wahlestedt C."/>
            <person name="Mattick J.S."/>
            <person name="Hume D.A."/>
            <person name="Kai C."/>
            <person name="Sasaki D."/>
            <person name="Tomaru Y."/>
            <person name="Fukuda S."/>
            <person name="Kanamori-Katayama M."/>
            <person name="Suzuki M."/>
            <person name="Aoki J."/>
            <person name="Arakawa T."/>
            <person name="Iida J."/>
            <person name="Imamura K."/>
            <person name="Itoh M."/>
            <person name="Kato T."/>
            <person name="Kawaji H."/>
            <person name="Kawagashira N."/>
            <person name="Kawashima T."/>
            <person name="Kojima M."/>
            <person name="Kondo S."/>
            <person name="Konno H."/>
            <person name="Nakano K."/>
            <person name="Ninomiya N."/>
            <person name="Nishio T."/>
            <person name="Okada M."/>
            <person name="Plessy C."/>
            <person name="Shibata K."/>
            <person name="Shiraki T."/>
            <person name="Suzuki S."/>
            <person name="Tagami M."/>
            <person name="Waki K."/>
            <person name="Watahiki A."/>
            <person name="Okamura-Oho Y."/>
            <person name="Suzuki H."/>
            <person name="Kawai J."/>
            <person name="Hayashizaki Y."/>
        </authorList>
    </citation>
    <scope>NUCLEOTIDE SEQUENCE [LARGE SCALE MRNA]</scope>
    <source>
        <strain>C57BL/6J</strain>
        <tissue>Inner ear</tissue>
    </source>
</reference>
<reference key="3">
    <citation type="submission" date="2005-07" db="EMBL/GenBank/DDBJ databases">
        <authorList>
            <person name="Mural R.J."/>
            <person name="Adams M.D."/>
            <person name="Myers E.W."/>
            <person name="Smith H.O."/>
            <person name="Venter J.C."/>
        </authorList>
    </citation>
    <scope>NUCLEOTIDE SEQUENCE [LARGE SCALE GENOMIC DNA]</scope>
</reference>
<reference key="4">
    <citation type="journal article" date="2004" name="Genome Res.">
        <title>The status, quality, and expansion of the NIH full-length cDNA project: the Mammalian Gene Collection (MGC).</title>
        <authorList>
            <consortium name="The MGC Project Team"/>
        </authorList>
    </citation>
    <scope>NUCLEOTIDE SEQUENCE [LARGE SCALE MRNA] (ISOFORM 1)</scope>
    <source>
        <tissue>Salivary gland</tissue>
    </source>
</reference>
<reference key="5">
    <citation type="journal article" date="2010" name="Cell">
        <title>A tissue-specific atlas of mouse protein phosphorylation and expression.</title>
        <authorList>
            <person name="Huttlin E.L."/>
            <person name="Jedrychowski M.P."/>
            <person name="Elias J.E."/>
            <person name="Goswami T."/>
            <person name="Rad R."/>
            <person name="Beausoleil S.A."/>
            <person name="Villen J."/>
            <person name="Haas W."/>
            <person name="Sowa M.E."/>
            <person name="Gygi S.P."/>
        </authorList>
    </citation>
    <scope>IDENTIFICATION BY MASS SPECTROMETRY [LARGE SCALE ANALYSIS]</scope>
    <source>
        <tissue>Brain</tissue>
        <tissue>Brown adipose tissue</tissue>
        <tissue>Heart</tissue>
        <tissue>Kidney</tissue>
        <tissue>Liver</tissue>
        <tissue>Lung</tissue>
        <tissue>Pancreas</tissue>
        <tissue>Spleen</tissue>
        <tissue>Testis</tissue>
    </source>
</reference>
<gene>
    <name type="primary">Eif2b4</name>
    <name type="synonym">Eif2b</name>
    <name type="synonym">Eif2bd</name>
    <name type="synonym">Jgr1a</name>
</gene>
<proteinExistence type="evidence at protein level"/>
<protein>
    <recommendedName>
        <fullName>Translation initiation factor eIF2B subunit delta</fullName>
    </recommendedName>
    <alternativeName>
        <fullName>eIF2B GDP-GTP exchange factor subunit delta</fullName>
    </alternativeName>
</protein>
<accession>Q61749</accession>
<accession>Q3TYW7</accession>
<accession>Q61748</accession>
<accession>Q8VC35</accession>
<feature type="initiator methionine" description="Removed" evidence="2">
    <location>
        <position position="1"/>
    </location>
</feature>
<feature type="chain" id="PRO_0000156068" description="Translation initiation factor eIF2B subunit delta">
    <location>
        <begin position="2"/>
        <end position="524"/>
    </location>
</feature>
<feature type="region of interest" description="Disordered" evidence="3">
    <location>
        <begin position="1"/>
        <end position="155"/>
    </location>
</feature>
<feature type="region of interest" description="May bind the chemical integrated stress response (ISR) inhibitor ISRIB" evidence="2">
    <location>
        <begin position="171"/>
        <end position="180"/>
    </location>
</feature>
<feature type="compositionally biased region" description="Basic and acidic residues" evidence="3">
    <location>
        <begin position="8"/>
        <end position="20"/>
    </location>
</feature>
<feature type="compositionally biased region" description="Basic and acidic residues" evidence="3">
    <location>
        <begin position="31"/>
        <end position="40"/>
    </location>
</feature>
<feature type="compositionally biased region" description="Basic residues" evidence="3">
    <location>
        <begin position="41"/>
        <end position="51"/>
    </location>
</feature>
<feature type="compositionally biased region" description="Basic and acidic residues" evidence="3">
    <location>
        <begin position="96"/>
        <end position="121"/>
    </location>
</feature>
<feature type="compositionally biased region" description="Polar residues" evidence="3">
    <location>
        <begin position="130"/>
        <end position="140"/>
    </location>
</feature>
<feature type="modified residue" description="N-acetylalanine" evidence="2">
    <location>
        <position position="2"/>
    </location>
</feature>
<feature type="modified residue" description="Phosphoserine" evidence="2">
    <location>
        <position position="12"/>
    </location>
</feature>
<feature type="modified residue" description="Phosphothreonine" evidence="2">
    <location>
        <position position="86"/>
    </location>
</feature>
<feature type="splice variant" id="VSP_001434" description="In isoform 2." evidence="4">
    <original>MAAVAVAVRE</original>
    <variation>MPTQQPAAPTSLPKSSRSLSGSLCALFSDA</variation>
    <location>
        <begin position="1"/>
        <end position="10"/>
    </location>
</feature>
<feature type="sequence conflict" description="In Ref. 1; AAA68046/AAA68047." evidence="5" ref="1">
    <original>R</original>
    <variation>K</variation>
    <location>
        <position position="302"/>
    </location>
</feature>
<comment type="function">
    <text evidence="2">Acts as a component of the translation initiation factor 2B (eIF2B) complex, which catalyzes the exchange of GDP for GTP on eukaryotic initiation factor 2 (eIF2) gamma subunit. Its guanine nucleotide exchange factor activity is repressed when bound to eIF2 complex phosphorylated on the alpha subunit, thereby limiting the amount of methionyl-initiator methionine tRNA available to the ribosome and consequently global translation is repressed.</text>
</comment>
<comment type="activity regulation">
    <text evidence="2">Activated by the chemical integrated stress response (ISR) inhibitor ISRIB which stimulates guanine nucleotide exchange factor activity for both phosphorylated and unphosphorylated eIF2.</text>
</comment>
<comment type="subunit">
    <text evidence="2">Component of the translation initiation factor 2B (eIF2B) complex which is a heterodecamer of two sets of five different subunits: alpha, beta, gamma, delta and epsilon. Subunits alpha, beta and delta comprise a regulatory subcomplex and subunits epsilon and gamma comprise a catalytic subcomplex. Within the complex, the hexameric regulatory complex resides at the center, with the two heterodimeric catalytic subcomplexes bound on opposite sides.</text>
</comment>
<comment type="subcellular location">
    <subcellularLocation>
        <location evidence="1">Cytoplasm</location>
        <location evidence="1">Cytosol</location>
    </subcellularLocation>
</comment>
<comment type="alternative products">
    <event type="alternative splicing"/>
    <isoform>
        <id>Q61749-1</id>
        <name>1</name>
        <sequence type="displayed"/>
    </isoform>
    <isoform>
        <id>Q61749-2</id>
        <name>2</name>
        <sequence type="described" ref="VSP_001434"/>
    </isoform>
</comment>
<comment type="similarity">
    <text evidence="5">Belongs to the eIF-2B alpha/beta/delta subunits family.</text>
</comment>